<reference key="1">
    <citation type="submission" date="2007-09" db="EMBL/GenBank/DDBJ databases">
        <title>Complete genome sequence of Rickettsia akari.</title>
        <authorList>
            <person name="Madan A."/>
            <person name="Fahey J."/>
            <person name="Helton E."/>
            <person name="Ketteman M."/>
            <person name="Madan A."/>
            <person name="Rodrigues S."/>
            <person name="Sanchez A."/>
            <person name="Whiting M."/>
            <person name="Dasch G."/>
            <person name="Eremeeva M."/>
        </authorList>
    </citation>
    <scope>NUCLEOTIDE SEQUENCE [LARGE SCALE GENOMIC DNA]</scope>
    <source>
        <strain>Hartford</strain>
    </source>
</reference>
<feature type="chain" id="PRO_1000003813" description="Nucleoid-associated protein A1C_06705">
    <location>
        <begin position="1"/>
        <end position="107"/>
    </location>
</feature>
<protein>
    <recommendedName>
        <fullName evidence="1">Nucleoid-associated protein A1C_06705</fullName>
    </recommendedName>
</protein>
<gene>
    <name type="ordered locus">A1C_06705</name>
</gene>
<sequence length="107" mass="11775">MVNFNQFLKQAQSMQKKMQEAQEQMANARYTGKAGGGLVEIIITGKGEVAKISIDESLLKSEEKEMLEDLIKVAFNDAKQKCDEDSQNSLSGALNGMSLPPGFKMPF</sequence>
<accession>A8GQ89</accession>
<dbReference type="EMBL" id="CP000847">
    <property type="protein sequence ID" value="ABV75564.1"/>
    <property type="molecule type" value="Genomic_DNA"/>
</dbReference>
<dbReference type="RefSeq" id="WP_012150193.1">
    <property type="nucleotide sequence ID" value="NC_009881.1"/>
</dbReference>
<dbReference type="SMR" id="A8GQ89"/>
<dbReference type="STRING" id="293614.A1C_06705"/>
<dbReference type="KEGG" id="rak:A1C_06705"/>
<dbReference type="eggNOG" id="COG0718">
    <property type="taxonomic scope" value="Bacteria"/>
</dbReference>
<dbReference type="HOGENOM" id="CLU_140930_0_0_5"/>
<dbReference type="Proteomes" id="UP000006830">
    <property type="component" value="Chromosome"/>
</dbReference>
<dbReference type="GO" id="GO:0043590">
    <property type="term" value="C:bacterial nucleoid"/>
    <property type="evidence" value="ECO:0007669"/>
    <property type="project" value="UniProtKB-UniRule"/>
</dbReference>
<dbReference type="GO" id="GO:0005829">
    <property type="term" value="C:cytosol"/>
    <property type="evidence" value="ECO:0007669"/>
    <property type="project" value="TreeGrafter"/>
</dbReference>
<dbReference type="GO" id="GO:0003677">
    <property type="term" value="F:DNA binding"/>
    <property type="evidence" value="ECO:0007669"/>
    <property type="project" value="UniProtKB-UniRule"/>
</dbReference>
<dbReference type="Gene3D" id="3.30.1310.10">
    <property type="entry name" value="Nucleoid-associated protein YbaB-like domain"/>
    <property type="match status" value="1"/>
</dbReference>
<dbReference type="HAMAP" id="MF_00274">
    <property type="entry name" value="DNA_YbaB_EbfC"/>
    <property type="match status" value="1"/>
</dbReference>
<dbReference type="InterPro" id="IPR036894">
    <property type="entry name" value="YbaB-like_sf"/>
</dbReference>
<dbReference type="InterPro" id="IPR004401">
    <property type="entry name" value="YbaB/EbfC"/>
</dbReference>
<dbReference type="NCBIfam" id="TIGR00103">
    <property type="entry name" value="DNA_YbaB_EbfC"/>
    <property type="match status" value="1"/>
</dbReference>
<dbReference type="PANTHER" id="PTHR33449">
    <property type="entry name" value="NUCLEOID-ASSOCIATED PROTEIN YBAB"/>
    <property type="match status" value="1"/>
</dbReference>
<dbReference type="PANTHER" id="PTHR33449:SF1">
    <property type="entry name" value="NUCLEOID-ASSOCIATED PROTEIN YBAB"/>
    <property type="match status" value="1"/>
</dbReference>
<dbReference type="Pfam" id="PF02575">
    <property type="entry name" value="YbaB_DNA_bd"/>
    <property type="match status" value="1"/>
</dbReference>
<dbReference type="PIRSF" id="PIRSF004555">
    <property type="entry name" value="UCP004555"/>
    <property type="match status" value="1"/>
</dbReference>
<dbReference type="SUPFAM" id="SSF82607">
    <property type="entry name" value="YbaB-like"/>
    <property type="match status" value="1"/>
</dbReference>
<comment type="function">
    <text evidence="1">Binds to DNA and alters its conformation. May be involved in regulation of gene expression, nucleoid organization and DNA protection.</text>
</comment>
<comment type="subunit">
    <text evidence="1">Homodimer.</text>
</comment>
<comment type="subcellular location">
    <subcellularLocation>
        <location evidence="1">Cytoplasm</location>
        <location evidence="1">Nucleoid</location>
    </subcellularLocation>
</comment>
<comment type="similarity">
    <text evidence="1">Belongs to the YbaB/EbfC family.</text>
</comment>
<keyword id="KW-0963">Cytoplasm</keyword>
<keyword id="KW-0238">DNA-binding</keyword>
<name>Y6705_RICAH</name>
<proteinExistence type="inferred from homology"/>
<organism>
    <name type="scientific">Rickettsia akari (strain Hartford)</name>
    <dbReference type="NCBI Taxonomy" id="293614"/>
    <lineage>
        <taxon>Bacteria</taxon>
        <taxon>Pseudomonadati</taxon>
        <taxon>Pseudomonadota</taxon>
        <taxon>Alphaproteobacteria</taxon>
        <taxon>Rickettsiales</taxon>
        <taxon>Rickettsiaceae</taxon>
        <taxon>Rickettsieae</taxon>
        <taxon>Rickettsia</taxon>
        <taxon>spotted fever group</taxon>
    </lineage>
</organism>
<evidence type="ECO:0000255" key="1">
    <source>
        <dbReference type="HAMAP-Rule" id="MF_00274"/>
    </source>
</evidence>